<evidence type="ECO:0000255" key="1"/>
<evidence type="ECO:0000256" key="2">
    <source>
        <dbReference type="SAM" id="MobiDB-lite"/>
    </source>
</evidence>
<evidence type="ECO:0000312" key="3">
    <source>
        <dbReference type="EMBL" id="CAA19132.1"/>
    </source>
</evidence>
<reference evidence="3" key="1">
    <citation type="journal article" date="2002" name="Nature">
        <title>The genome sequence of Schizosaccharomyces pombe.</title>
        <authorList>
            <person name="Wood V."/>
            <person name="Gwilliam R."/>
            <person name="Rajandream M.A."/>
            <person name="Lyne M.H."/>
            <person name="Lyne R."/>
            <person name="Stewart A."/>
            <person name="Sgouros J.G."/>
            <person name="Peat N."/>
            <person name="Hayles J."/>
            <person name="Baker S.G."/>
            <person name="Basham D."/>
            <person name="Bowman S."/>
            <person name="Brooks K."/>
            <person name="Brown D."/>
            <person name="Brown S."/>
            <person name="Chillingworth T."/>
            <person name="Churcher C.M."/>
            <person name="Collins M."/>
            <person name="Connor R."/>
            <person name="Cronin A."/>
            <person name="Davis P."/>
            <person name="Feltwell T."/>
            <person name="Fraser A."/>
            <person name="Gentles S."/>
            <person name="Goble A."/>
            <person name="Hamlin N."/>
            <person name="Harris D.E."/>
            <person name="Hidalgo J."/>
            <person name="Hodgson G."/>
            <person name="Holroyd S."/>
            <person name="Hornsby T."/>
            <person name="Howarth S."/>
            <person name="Huckle E.J."/>
            <person name="Hunt S."/>
            <person name="Jagels K."/>
            <person name="James K.D."/>
            <person name="Jones L."/>
            <person name="Jones M."/>
            <person name="Leather S."/>
            <person name="McDonald S."/>
            <person name="McLean J."/>
            <person name="Mooney P."/>
            <person name="Moule S."/>
            <person name="Mungall K.L."/>
            <person name="Murphy L.D."/>
            <person name="Niblett D."/>
            <person name="Odell C."/>
            <person name="Oliver K."/>
            <person name="O'Neil S."/>
            <person name="Pearson D."/>
            <person name="Quail M.A."/>
            <person name="Rabbinowitsch E."/>
            <person name="Rutherford K.M."/>
            <person name="Rutter S."/>
            <person name="Saunders D."/>
            <person name="Seeger K."/>
            <person name="Sharp S."/>
            <person name="Skelton J."/>
            <person name="Simmonds M.N."/>
            <person name="Squares R."/>
            <person name="Squares S."/>
            <person name="Stevens K."/>
            <person name="Taylor K."/>
            <person name="Taylor R.G."/>
            <person name="Tivey A."/>
            <person name="Walsh S.V."/>
            <person name="Warren T."/>
            <person name="Whitehead S."/>
            <person name="Woodward J.R."/>
            <person name="Volckaert G."/>
            <person name="Aert R."/>
            <person name="Robben J."/>
            <person name="Grymonprez B."/>
            <person name="Weltjens I."/>
            <person name="Vanstreels E."/>
            <person name="Rieger M."/>
            <person name="Schaefer M."/>
            <person name="Mueller-Auer S."/>
            <person name="Gabel C."/>
            <person name="Fuchs M."/>
            <person name="Duesterhoeft A."/>
            <person name="Fritzc C."/>
            <person name="Holzer E."/>
            <person name="Moestl D."/>
            <person name="Hilbert H."/>
            <person name="Borzym K."/>
            <person name="Langer I."/>
            <person name="Beck A."/>
            <person name="Lehrach H."/>
            <person name="Reinhardt R."/>
            <person name="Pohl T.M."/>
            <person name="Eger P."/>
            <person name="Zimmermann W."/>
            <person name="Wedler H."/>
            <person name="Wambutt R."/>
            <person name="Purnelle B."/>
            <person name="Goffeau A."/>
            <person name="Cadieu E."/>
            <person name="Dreano S."/>
            <person name="Gloux S."/>
            <person name="Lelaure V."/>
            <person name="Mottier S."/>
            <person name="Galibert F."/>
            <person name="Aves S.J."/>
            <person name="Xiang Z."/>
            <person name="Hunt C."/>
            <person name="Moore K."/>
            <person name="Hurst S.M."/>
            <person name="Lucas M."/>
            <person name="Rochet M."/>
            <person name="Gaillardin C."/>
            <person name="Tallada V.A."/>
            <person name="Garzon A."/>
            <person name="Thode G."/>
            <person name="Daga R.R."/>
            <person name="Cruzado L."/>
            <person name="Jimenez J."/>
            <person name="Sanchez M."/>
            <person name="del Rey F."/>
            <person name="Benito J."/>
            <person name="Dominguez A."/>
            <person name="Revuelta J.L."/>
            <person name="Moreno S."/>
            <person name="Armstrong J."/>
            <person name="Forsburg S.L."/>
            <person name="Cerutti L."/>
            <person name="Lowe T."/>
            <person name="McCombie W.R."/>
            <person name="Paulsen I."/>
            <person name="Potashkin J."/>
            <person name="Shpakovski G.V."/>
            <person name="Ussery D."/>
            <person name="Barrell B.G."/>
            <person name="Nurse P."/>
        </authorList>
    </citation>
    <scope>NUCLEOTIDE SEQUENCE [LARGE SCALE GENOMIC DNA]</scope>
    <source>
        <strain>972 / ATCC 24843</strain>
    </source>
</reference>
<dbReference type="EMBL" id="CU329672">
    <property type="protein sequence ID" value="CAA19132.1"/>
    <property type="molecule type" value="Genomic_DNA"/>
</dbReference>
<dbReference type="PIR" id="T41613">
    <property type="entry name" value="T41613"/>
</dbReference>
<dbReference type="RefSeq" id="NP_587752.1">
    <property type="nucleotide sequence ID" value="NM_001022746.2"/>
</dbReference>
<dbReference type="BioGRID" id="276008">
    <property type="interactions" value="1"/>
</dbReference>
<dbReference type="FunCoup" id="O59814">
    <property type="interactions" value="8"/>
</dbReference>
<dbReference type="STRING" id="284812.O59814"/>
<dbReference type="iPTMnet" id="O59814"/>
<dbReference type="PaxDb" id="4896-SPCC794.04c.1"/>
<dbReference type="EnsemblFungi" id="SPCC794.04c.1">
    <property type="protein sequence ID" value="SPCC794.04c.1:pep"/>
    <property type="gene ID" value="SPCC794.04c"/>
</dbReference>
<dbReference type="KEGG" id="spo:2539445"/>
<dbReference type="PomBase" id="SPCC794.04c"/>
<dbReference type="VEuPathDB" id="FungiDB:SPCC794.04c"/>
<dbReference type="eggNOG" id="KOG0255">
    <property type="taxonomic scope" value="Eukaryota"/>
</dbReference>
<dbReference type="HOGENOM" id="CLU_008455_11_1_1"/>
<dbReference type="InParanoid" id="O59814"/>
<dbReference type="OMA" id="NLGTHWT"/>
<dbReference type="PhylomeDB" id="O59814"/>
<dbReference type="PRO" id="PR:O59814"/>
<dbReference type="Proteomes" id="UP000002485">
    <property type="component" value="Chromosome III"/>
</dbReference>
<dbReference type="GO" id="GO:0005886">
    <property type="term" value="C:plasma membrane"/>
    <property type="evidence" value="ECO:0000318"/>
    <property type="project" value="GO_Central"/>
</dbReference>
<dbReference type="GO" id="GO:0015171">
    <property type="term" value="F:amino acid transmembrane transporter activity"/>
    <property type="evidence" value="ECO:0000255"/>
    <property type="project" value="PomBase"/>
</dbReference>
<dbReference type="GO" id="GO:0022857">
    <property type="term" value="F:transmembrane transporter activity"/>
    <property type="evidence" value="ECO:0000318"/>
    <property type="project" value="GO_Central"/>
</dbReference>
<dbReference type="GO" id="GO:0003333">
    <property type="term" value="P:amino acid transmembrane transport"/>
    <property type="evidence" value="ECO:0000255"/>
    <property type="project" value="PomBase"/>
</dbReference>
<dbReference type="GO" id="GO:0055085">
    <property type="term" value="P:transmembrane transport"/>
    <property type="evidence" value="ECO:0000318"/>
    <property type="project" value="GO_Central"/>
</dbReference>
<dbReference type="CDD" id="cd17323">
    <property type="entry name" value="MFS_Tpo1_MDR_like"/>
    <property type="match status" value="1"/>
</dbReference>
<dbReference type="FunFam" id="1.20.1250.20:FF:000082">
    <property type="entry name" value="MFS multidrug transporter, putative"/>
    <property type="match status" value="1"/>
</dbReference>
<dbReference type="Gene3D" id="1.20.1250.20">
    <property type="entry name" value="MFS general substrate transporter like domains"/>
    <property type="match status" value="1"/>
</dbReference>
<dbReference type="InterPro" id="IPR011701">
    <property type="entry name" value="MFS"/>
</dbReference>
<dbReference type="InterPro" id="IPR020846">
    <property type="entry name" value="MFS_dom"/>
</dbReference>
<dbReference type="InterPro" id="IPR036259">
    <property type="entry name" value="MFS_trans_sf"/>
</dbReference>
<dbReference type="PANTHER" id="PTHR23502">
    <property type="entry name" value="MAJOR FACILITATOR SUPERFAMILY"/>
    <property type="match status" value="1"/>
</dbReference>
<dbReference type="PANTHER" id="PTHR23502:SF47">
    <property type="entry name" value="MAJOR FACILITATOR SUPERFAMILY (MFS) PROFILE DOMAIN-CONTAINING PROTEIN-RELATED"/>
    <property type="match status" value="1"/>
</dbReference>
<dbReference type="Pfam" id="PF07690">
    <property type="entry name" value="MFS_1"/>
    <property type="match status" value="1"/>
</dbReference>
<dbReference type="SUPFAM" id="SSF103473">
    <property type="entry name" value="MFS general substrate transporter"/>
    <property type="match status" value="1"/>
</dbReference>
<dbReference type="PROSITE" id="PS50850">
    <property type="entry name" value="MFS"/>
    <property type="match status" value="1"/>
</dbReference>
<sequence>MDYIFLITGYKYRHLNLEAYNAKSRAIENEKRYLGNDRNLPFHREREKVESNPNSSDEEDLTSTNNTRSSDNTTSDTEDDSGEDSYQVEWESGKDPLAPKNWPMWKKIYTLLVASFIAIVITANSSIFSDGGGIAAQQYHVGATVGDLCSATFLLGFAAGSVLFAPLSEVYGRLPLYSVTLVIFVVFQIGGGCSKNIWSLVIFRFFHGFFGCTPMSACGGTISDLFNPIQRTGALLVFCAAAFVGPLVGPVMGGYITESKLGWRWDFWINMIWAGLTWVIVCFTMPETHSETLLDFKARYLRKKTNCDKWYNEHEHQRDPAYAIRTALTRGVRLLCTEPIVQAFCMYLVFINILLYICMVGYPLIFYQYGFNAGEVGLAILGILVGILLGLALTPIIYVHYRRRYEMRDGNICPEDRLFPLFFGSFFIPIALFWLGWTCYPSVHWAAPMVSGIFLGWGFLYVLAVCYSYLVDCYHEMAASALSVATFTRYAAGGGMTIVARPMYNNLNYHWATSLLAFVGCGLVPIPFIFFFWGRRIRQRSPHAYKG</sequence>
<protein>
    <recommendedName>
        <fullName>Uncharacterized transporter C794.04c</fullName>
    </recommendedName>
</protein>
<organism>
    <name type="scientific">Schizosaccharomyces pombe (strain 972 / ATCC 24843)</name>
    <name type="common">Fission yeast</name>
    <dbReference type="NCBI Taxonomy" id="284812"/>
    <lineage>
        <taxon>Eukaryota</taxon>
        <taxon>Fungi</taxon>
        <taxon>Dikarya</taxon>
        <taxon>Ascomycota</taxon>
        <taxon>Taphrinomycotina</taxon>
        <taxon>Schizosaccharomycetes</taxon>
        <taxon>Schizosaccharomycetales</taxon>
        <taxon>Schizosaccharomycetaceae</taxon>
        <taxon>Schizosaccharomyces</taxon>
    </lineage>
</organism>
<accession>O59814</accession>
<name>YCT4_SCHPO</name>
<proteinExistence type="inferred from homology"/>
<gene>
    <name type="ORF">SPCC794.04c</name>
</gene>
<feature type="chain" id="PRO_0000372787" description="Uncharacterized transporter C794.04c">
    <location>
        <begin position="1"/>
        <end position="547"/>
    </location>
</feature>
<feature type="transmembrane region" description="Helical" evidence="1">
    <location>
        <begin position="108"/>
        <end position="128"/>
    </location>
</feature>
<feature type="transmembrane region" description="Helical" evidence="1">
    <location>
        <begin position="148"/>
        <end position="168"/>
    </location>
</feature>
<feature type="transmembrane region" description="Helical" evidence="1">
    <location>
        <begin position="174"/>
        <end position="194"/>
    </location>
</feature>
<feature type="transmembrane region" description="Helical" evidence="1">
    <location>
        <begin position="197"/>
        <end position="217"/>
    </location>
</feature>
<feature type="transmembrane region" description="Helical" evidence="1">
    <location>
        <begin position="233"/>
        <end position="253"/>
    </location>
</feature>
<feature type="transmembrane region" description="Helical" evidence="1">
    <location>
        <begin position="265"/>
        <end position="285"/>
    </location>
</feature>
<feature type="transmembrane region" description="Helical" evidence="1">
    <location>
        <begin position="346"/>
        <end position="366"/>
    </location>
</feature>
<feature type="transmembrane region" description="Helical" evidence="1">
    <location>
        <begin position="377"/>
        <end position="397"/>
    </location>
</feature>
<feature type="transmembrane region" description="Helical" evidence="1">
    <location>
        <begin position="418"/>
        <end position="438"/>
    </location>
</feature>
<feature type="transmembrane region" description="Helical" evidence="1">
    <location>
        <begin position="445"/>
        <end position="465"/>
    </location>
</feature>
<feature type="transmembrane region" description="Helical" evidence="1">
    <location>
        <begin position="478"/>
        <end position="500"/>
    </location>
</feature>
<feature type="transmembrane region" description="Helical" evidence="1">
    <location>
        <begin position="514"/>
        <end position="534"/>
    </location>
</feature>
<feature type="region of interest" description="Disordered" evidence="2">
    <location>
        <begin position="38"/>
        <end position="89"/>
    </location>
</feature>
<feature type="compositionally biased region" description="Basic and acidic residues" evidence="2">
    <location>
        <begin position="38"/>
        <end position="50"/>
    </location>
</feature>
<feature type="compositionally biased region" description="Low complexity" evidence="2">
    <location>
        <begin position="62"/>
        <end position="75"/>
    </location>
</feature>
<comment type="subcellular location">
    <subcellularLocation>
        <location evidence="1">Membrane</location>
        <topology evidence="1">Multi-pass membrane protein</topology>
    </subcellularLocation>
</comment>
<comment type="similarity">
    <text evidence="1">Belongs to the major facilitator superfamily. CAR1 family.</text>
</comment>
<keyword id="KW-0472">Membrane</keyword>
<keyword id="KW-1185">Reference proteome</keyword>
<keyword id="KW-0812">Transmembrane</keyword>
<keyword id="KW-1133">Transmembrane helix</keyword>
<keyword id="KW-0813">Transport</keyword>